<feature type="chain" id="PRO_0000074328" description="Chromatin-remodeling ATPase INO80">
    <location>
        <begin position="1"/>
        <end position="1910"/>
    </location>
</feature>
<feature type="domain" description="DBINO" evidence="6">
    <location>
        <begin position="726"/>
        <end position="851"/>
    </location>
</feature>
<feature type="domain" description="Helicase ATP-binding" evidence="4">
    <location>
        <begin position="1010"/>
        <end position="1182"/>
    </location>
</feature>
<feature type="domain" description="Helicase C-terminal" evidence="5">
    <location>
        <begin position="1583"/>
        <end position="1747"/>
    </location>
</feature>
<feature type="region of interest" description="Disordered" evidence="7">
    <location>
        <begin position="1"/>
        <end position="487"/>
    </location>
</feature>
<feature type="region of interest" description="Disordered" evidence="7">
    <location>
        <begin position="548"/>
        <end position="611"/>
    </location>
</feature>
<feature type="region of interest" description="Disordered" evidence="7">
    <location>
        <begin position="630"/>
        <end position="673"/>
    </location>
</feature>
<feature type="region of interest" description="Disordered" evidence="7">
    <location>
        <begin position="852"/>
        <end position="878"/>
    </location>
</feature>
<feature type="region of interest" description="Disordered" evidence="7">
    <location>
        <begin position="1760"/>
        <end position="1910"/>
    </location>
</feature>
<feature type="coiled-coil region" evidence="3">
    <location>
        <begin position="790"/>
        <end position="840"/>
    </location>
</feature>
<feature type="short sequence motif" description="DEAQ box">
    <location>
        <begin position="1133"/>
        <end position="1136"/>
    </location>
</feature>
<feature type="compositionally biased region" description="Basic and acidic residues" evidence="7">
    <location>
        <begin position="49"/>
        <end position="59"/>
    </location>
</feature>
<feature type="compositionally biased region" description="Pro residues" evidence="7">
    <location>
        <begin position="69"/>
        <end position="84"/>
    </location>
</feature>
<feature type="compositionally biased region" description="Basic and acidic residues" evidence="7">
    <location>
        <begin position="118"/>
        <end position="133"/>
    </location>
</feature>
<feature type="compositionally biased region" description="Basic and acidic residues" evidence="7">
    <location>
        <begin position="167"/>
        <end position="199"/>
    </location>
</feature>
<feature type="compositionally biased region" description="Basic and acidic residues" evidence="7">
    <location>
        <begin position="222"/>
        <end position="231"/>
    </location>
</feature>
<feature type="compositionally biased region" description="Polar residues" evidence="7">
    <location>
        <begin position="257"/>
        <end position="266"/>
    </location>
</feature>
<feature type="compositionally biased region" description="Polar residues" evidence="7">
    <location>
        <begin position="311"/>
        <end position="320"/>
    </location>
</feature>
<feature type="compositionally biased region" description="Low complexity" evidence="7">
    <location>
        <begin position="321"/>
        <end position="334"/>
    </location>
</feature>
<feature type="compositionally biased region" description="Polar residues" evidence="7">
    <location>
        <begin position="349"/>
        <end position="362"/>
    </location>
</feature>
<feature type="compositionally biased region" description="Basic and acidic residues" evidence="7">
    <location>
        <begin position="374"/>
        <end position="383"/>
    </location>
</feature>
<feature type="compositionally biased region" description="Basic and acidic residues" evidence="7">
    <location>
        <begin position="548"/>
        <end position="572"/>
    </location>
</feature>
<feature type="compositionally biased region" description="Acidic residues" evidence="7">
    <location>
        <begin position="599"/>
        <end position="611"/>
    </location>
</feature>
<feature type="compositionally biased region" description="Gly residues" evidence="7">
    <location>
        <begin position="1840"/>
        <end position="1850"/>
    </location>
</feature>
<feature type="compositionally biased region" description="Basic residues" evidence="7">
    <location>
        <begin position="1888"/>
        <end position="1899"/>
    </location>
</feature>
<feature type="binding site" evidence="4">
    <location>
        <begin position="1023"/>
        <end position="1030"/>
    </location>
    <ligand>
        <name>ATP</name>
        <dbReference type="ChEBI" id="CHEBI:30616"/>
    </ligand>
</feature>
<name>INO80_MYCMD</name>
<sequence length="1910" mass="214514">MSGEDRGAPYRYAGERPPAYPADGYASYQRGLKSSIPSRSYDTAYPEQGYDRHLRERVHPAYTTGPSYGVPPPPPTDYRRPPPQAAYRYEEDYHHRRAPAQPHLEYAPEHRRQPVHSDAYREADDRRSFEQARSDPYASPSRHAYQDSYRSELPHERRHAPAAYERISVRDDARSAPENRHIDEPAVYRRDEYDAHSREIQPSYRRGAHRSPRLSPQPVVSAHERSSEYATRDYSASAARYAEPVHQPESPPRPSMSIFNMLNDRSANGAVESVHSSPTKSSIAAEHESYPTTAQEPSHASRAAFDPAREQSYSTARDSQAYSRGSEARAGAARVNYTVHPEDEAAISQRRNSSAHQQSSIKSVRHPANAVDEPLIRVKHEEATSASLDAQMSAEPPVSHTLNNGERLSAQDAKVATEDSSLAANGNGKVDSAGGTARPAPAKTQLKLRNNPLPASKSNSSFVAPPPPAKKNRDPDGWESDLSNEENQPFWQTELDDYIFDVRERQRLIEDAFVASMREKHVEVERRLARAYEGRYFAVIRQIRLREQQEASQRDMERRQDHVRQQRDHEIDLELLGTLSDGQQNMGTRKKKGGRGTDDDGLLQADDDDDDDSDDVALADLAARNGSKSNIIKLKRSKGKPAAADPRNKKRRLENGAALSPAPGSEVDSTLADFGGNFDGDDSAFASHQASPTPDDVSFALDVDASGKVPIDARRAQQLEDAHRRIWTTIAKRDVPKVYRTVLQSASSKTMYWRRISSVVQREAKRGAARNNKTVKDVQLRARKVMREVLVFWKRNEKEERELRKKAEREALEKAKKEEEMREAKRQARKLNFLISQTELYSHFVGSKLKTAEAEESEETAGSSKIIDPNAQPSDATVLPINPHSELADAEARLAELDDIDFDDEDESNLRAHAARNAQEAVRLAKEKAQAFDVAAAEERRRNEAAAREREGLDAGPVKQIEEKDLGKAFDSDDMNFLNPTSMGQTEIKQPKMLTCQLKEYQLKGLNWLANLYEQGINGILADEMGLGKTVQSISLMAYLAEVHDIWGPFLVIAPASTLHNWQQEISKFVPTLKALPYWGNVKDRAVLRKFWNRKQISYNRDAPFHVLVTSYQLVVSDEKYFQRVKWQYMILDEAQAIKSSSSIRWKTLLGFNCRNRLLLTGTPVQNSMQELWALLHFIMPSLFDSHDEFSEWFSKDIESHAEQKGTLNEHQLRRLHMILKPFMLRRIKKNVQNELGDKIEIDVFCDLSARQKMLYRGLRANISVAELMDRATSNDEAGLKSLMNLVMQFRKVCNHPELFERADVRAPFALADFARSGSLAREGDLLNLPDSTTSLIELQVPKLLVREGGIFDIPGHNSRKGFDTGYLQNLFNIWRAPHIHESLQEERSTFASLPLIGVSPSEAQKTFHSTGIKRILAAAAEERHWRSLEAFASDDTFAAASVRPLAKMLRPMPTTSGRSPSVLMPLEEVAADYRRHSYLAKDSARAVVAPAVAPPIKLYSNDGPFMQAQERFSRDAQVSVTLFGLSPEGRESVKRVEELQSELPEVPPQGVMRDSSIDQLPYNGMQVPQMNKLIVDSSKLAKLDVLLRELKANGHRVLIYFQMTRMIDLMEEYLIYRQYKYLRLDGASKISDRRDMVTDWQTKPELFIFLLSTRAGGLGINLTAADTVIFYDHDWNPSNDSQAMDRAHRLGQTKQVTVYRLITKGTIDERIVRLARNKKEVQDIVVGTKAYSETGMAKPQEIVSLLLDDDELAESMLRKKQAEEAQTAQEKADLARASHAKRRLNKDRAAAAVESPAPVGSTWSLEDDEDDFFGARPPSKADTDTAETTPQLQSKKRSVGGGGGGSGGAKRGRISEVASPRMTPLSLDDGALMASGEQLASPSKGAAAKRKSKSHRKKTVDELAGVDLD</sequence>
<organism>
    <name type="scientific">Mycosarcoma maydis</name>
    <name type="common">Corn smut fungus</name>
    <name type="synonym">Ustilago maydis</name>
    <dbReference type="NCBI Taxonomy" id="5270"/>
    <lineage>
        <taxon>Eukaryota</taxon>
        <taxon>Fungi</taxon>
        <taxon>Dikarya</taxon>
        <taxon>Basidiomycota</taxon>
        <taxon>Ustilaginomycotina</taxon>
        <taxon>Ustilaginomycetes</taxon>
        <taxon>Ustilaginales</taxon>
        <taxon>Ustilaginaceae</taxon>
        <taxon>Mycosarcoma</taxon>
    </lineage>
</organism>
<accession>Q4PGL2</accession>
<accession>A0A0D1EAT0</accession>
<dbReference type="EC" id="3.6.4.-" evidence="1"/>
<dbReference type="EMBL" id="CM003140">
    <property type="protein sequence ID" value="KIS72346.1"/>
    <property type="molecule type" value="Genomic_DNA"/>
</dbReference>
<dbReference type="RefSeq" id="XP_011386530.1">
    <property type="nucleotide sequence ID" value="XM_011388228.1"/>
</dbReference>
<dbReference type="SMR" id="Q4PGL2"/>
<dbReference type="FunCoup" id="Q4PGL2">
    <property type="interactions" value="726"/>
</dbReference>
<dbReference type="STRING" id="237631.Q4PGL2"/>
<dbReference type="EnsemblFungi" id="KIS72346">
    <property type="protein sequence ID" value="KIS72346"/>
    <property type="gene ID" value="UMAG_00751"/>
</dbReference>
<dbReference type="GeneID" id="23561963"/>
<dbReference type="KEGG" id="uma:UMAG_00751"/>
<dbReference type="VEuPathDB" id="FungiDB:UMAG_00751"/>
<dbReference type="eggNOG" id="KOG0388">
    <property type="taxonomic scope" value="Eukaryota"/>
</dbReference>
<dbReference type="HOGENOM" id="CLU_000315_25_0_1"/>
<dbReference type="InParanoid" id="Q4PGL2"/>
<dbReference type="OMA" id="DAHRRIW"/>
<dbReference type="OrthoDB" id="372624at2759"/>
<dbReference type="Proteomes" id="UP000000561">
    <property type="component" value="Chromosome 1"/>
</dbReference>
<dbReference type="GO" id="GO:0031011">
    <property type="term" value="C:Ino80 complex"/>
    <property type="evidence" value="ECO:0000318"/>
    <property type="project" value="GO_Central"/>
</dbReference>
<dbReference type="GO" id="GO:0005524">
    <property type="term" value="F:ATP binding"/>
    <property type="evidence" value="ECO:0007669"/>
    <property type="project" value="UniProtKB-KW"/>
</dbReference>
<dbReference type="GO" id="GO:0016887">
    <property type="term" value="F:ATP hydrolysis activity"/>
    <property type="evidence" value="ECO:0000318"/>
    <property type="project" value="GO_Central"/>
</dbReference>
<dbReference type="GO" id="GO:0140658">
    <property type="term" value="F:ATP-dependent chromatin remodeler activity"/>
    <property type="evidence" value="ECO:0007669"/>
    <property type="project" value="InterPro"/>
</dbReference>
<dbReference type="GO" id="GO:0003677">
    <property type="term" value="F:DNA binding"/>
    <property type="evidence" value="ECO:0007669"/>
    <property type="project" value="UniProtKB-KW"/>
</dbReference>
<dbReference type="GO" id="GO:0042393">
    <property type="term" value="F:histone binding"/>
    <property type="evidence" value="ECO:0000318"/>
    <property type="project" value="GO_Central"/>
</dbReference>
<dbReference type="GO" id="GO:0034080">
    <property type="term" value="P:CENP-A containing chromatin assembly"/>
    <property type="evidence" value="ECO:0007669"/>
    <property type="project" value="EnsemblFungi"/>
</dbReference>
<dbReference type="GO" id="GO:0006338">
    <property type="term" value="P:chromatin remodeling"/>
    <property type="evidence" value="ECO:0000318"/>
    <property type="project" value="GO_Central"/>
</dbReference>
<dbReference type="GO" id="GO:0006281">
    <property type="term" value="P:DNA repair"/>
    <property type="evidence" value="ECO:0000318"/>
    <property type="project" value="GO_Central"/>
</dbReference>
<dbReference type="GO" id="GO:0006351">
    <property type="term" value="P:DNA-templated transcription"/>
    <property type="evidence" value="ECO:0007669"/>
    <property type="project" value="InterPro"/>
</dbReference>
<dbReference type="GO" id="GO:0060255">
    <property type="term" value="P:regulation of macromolecule metabolic process"/>
    <property type="evidence" value="ECO:0007669"/>
    <property type="project" value="UniProtKB-ARBA"/>
</dbReference>
<dbReference type="CDD" id="cd18002">
    <property type="entry name" value="DEXQc_INO80"/>
    <property type="match status" value="1"/>
</dbReference>
<dbReference type="CDD" id="cd18793">
    <property type="entry name" value="SF2_C_SNF"/>
    <property type="match status" value="1"/>
</dbReference>
<dbReference type="FunFam" id="3.40.50.10810:FF:000022">
    <property type="entry name" value="Blast:Putative DNA helicase Ino80"/>
    <property type="match status" value="1"/>
</dbReference>
<dbReference type="FunFam" id="3.40.50.300:FF:001445">
    <property type="entry name" value="Chromatin-remodeling ATPase INO80"/>
    <property type="match status" value="1"/>
</dbReference>
<dbReference type="FunFam" id="3.40.50.300:FF:001304">
    <property type="entry name" value="DNA helicase INO80"/>
    <property type="match status" value="1"/>
</dbReference>
<dbReference type="Gene3D" id="3.40.50.300">
    <property type="entry name" value="P-loop containing nucleotide triphosphate hydrolases"/>
    <property type="match status" value="2"/>
</dbReference>
<dbReference type="Gene3D" id="3.40.50.10810">
    <property type="entry name" value="Tandem AAA-ATPase domain"/>
    <property type="match status" value="1"/>
</dbReference>
<dbReference type="InterPro" id="IPR020838">
    <property type="entry name" value="DBINO"/>
</dbReference>
<dbReference type="InterPro" id="IPR031047">
    <property type="entry name" value="DEXQc_INO80"/>
</dbReference>
<dbReference type="InterPro" id="IPR014001">
    <property type="entry name" value="Helicase_ATP-bd"/>
</dbReference>
<dbReference type="InterPro" id="IPR001650">
    <property type="entry name" value="Helicase_C-like"/>
</dbReference>
<dbReference type="InterPro" id="IPR050520">
    <property type="entry name" value="INO80/SWR1_helicase"/>
</dbReference>
<dbReference type="InterPro" id="IPR027417">
    <property type="entry name" value="P-loop_NTPase"/>
</dbReference>
<dbReference type="InterPro" id="IPR038718">
    <property type="entry name" value="SNF2-like_sf"/>
</dbReference>
<dbReference type="InterPro" id="IPR049730">
    <property type="entry name" value="SNF2/RAD54-like_C"/>
</dbReference>
<dbReference type="InterPro" id="IPR000330">
    <property type="entry name" value="SNF2_N"/>
</dbReference>
<dbReference type="PANTHER" id="PTHR45685:SF2">
    <property type="entry name" value="CHROMATIN-REMODELING ATPASE INO80"/>
    <property type="match status" value="1"/>
</dbReference>
<dbReference type="PANTHER" id="PTHR45685">
    <property type="entry name" value="HELICASE SRCAP-RELATED"/>
    <property type="match status" value="1"/>
</dbReference>
<dbReference type="Pfam" id="PF13892">
    <property type="entry name" value="DBINO"/>
    <property type="match status" value="1"/>
</dbReference>
<dbReference type="Pfam" id="PF00271">
    <property type="entry name" value="Helicase_C"/>
    <property type="match status" value="1"/>
</dbReference>
<dbReference type="Pfam" id="PF00176">
    <property type="entry name" value="SNF2-rel_dom"/>
    <property type="match status" value="1"/>
</dbReference>
<dbReference type="SMART" id="SM00487">
    <property type="entry name" value="DEXDc"/>
    <property type="match status" value="1"/>
</dbReference>
<dbReference type="SMART" id="SM00490">
    <property type="entry name" value="HELICc"/>
    <property type="match status" value="1"/>
</dbReference>
<dbReference type="SUPFAM" id="SSF52540">
    <property type="entry name" value="P-loop containing nucleoside triphosphate hydrolases"/>
    <property type="match status" value="2"/>
</dbReference>
<dbReference type="PROSITE" id="PS51413">
    <property type="entry name" value="DBINO"/>
    <property type="match status" value="1"/>
</dbReference>
<dbReference type="PROSITE" id="PS51192">
    <property type="entry name" value="HELICASE_ATP_BIND_1"/>
    <property type="match status" value="1"/>
</dbReference>
<dbReference type="PROSITE" id="PS51194">
    <property type="entry name" value="HELICASE_CTER"/>
    <property type="match status" value="1"/>
</dbReference>
<proteinExistence type="inferred from homology"/>
<reference key="1">
    <citation type="journal article" date="2006" name="Nature">
        <title>Insights from the genome of the biotrophic fungal plant pathogen Ustilago maydis.</title>
        <authorList>
            <person name="Kaemper J."/>
            <person name="Kahmann R."/>
            <person name="Boelker M."/>
            <person name="Ma L.-J."/>
            <person name="Brefort T."/>
            <person name="Saville B.J."/>
            <person name="Banuett F."/>
            <person name="Kronstad J.W."/>
            <person name="Gold S.E."/>
            <person name="Mueller O."/>
            <person name="Perlin M.H."/>
            <person name="Woesten H.A.B."/>
            <person name="de Vries R."/>
            <person name="Ruiz-Herrera J."/>
            <person name="Reynaga-Pena C.G."/>
            <person name="Snetselaar K."/>
            <person name="McCann M."/>
            <person name="Perez-Martin J."/>
            <person name="Feldbruegge M."/>
            <person name="Basse C.W."/>
            <person name="Steinberg G."/>
            <person name="Ibeas J.I."/>
            <person name="Holloman W."/>
            <person name="Guzman P."/>
            <person name="Farman M.L."/>
            <person name="Stajich J.E."/>
            <person name="Sentandreu R."/>
            <person name="Gonzalez-Prieto J.M."/>
            <person name="Kennell J.C."/>
            <person name="Molina L."/>
            <person name="Schirawski J."/>
            <person name="Mendoza-Mendoza A."/>
            <person name="Greilinger D."/>
            <person name="Muench K."/>
            <person name="Roessel N."/>
            <person name="Scherer M."/>
            <person name="Vranes M."/>
            <person name="Ladendorf O."/>
            <person name="Vincon V."/>
            <person name="Fuchs U."/>
            <person name="Sandrock B."/>
            <person name="Meng S."/>
            <person name="Ho E.C.H."/>
            <person name="Cahill M.J."/>
            <person name="Boyce K.J."/>
            <person name="Klose J."/>
            <person name="Klosterman S.J."/>
            <person name="Deelstra H.J."/>
            <person name="Ortiz-Castellanos L."/>
            <person name="Li W."/>
            <person name="Sanchez-Alonso P."/>
            <person name="Schreier P.H."/>
            <person name="Haeuser-Hahn I."/>
            <person name="Vaupel M."/>
            <person name="Koopmann E."/>
            <person name="Friedrich G."/>
            <person name="Voss H."/>
            <person name="Schlueter T."/>
            <person name="Margolis J."/>
            <person name="Platt D."/>
            <person name="Swimmer C."/>
            <person name="Gnirke A."/>
            <person name="Chen F."/>
            <person name="Vysotskaia V."/>
            <person name="Mannhaupt G."/>
            <person name="Gueldener U."/>
            <person name="Muensterkoetter M."/>
            <person name="Haase D."/>
            <person name="Oesterheld M."/>
            <person name="Mewes H.-W."/>
            <person name="Mauceli E.W."/>
            <person name="DeCaprio D."/>
            <person name="Wade C.M."/>
            <person name="Butler J."/>
            <person name="Young S.K."/>
            <person name="Jaffe D.B."/>
            <person name="Calvo S.E."/>
            <person name="Nusbaum C."/>
            <person name="Galagan J.E."/>
            <person name="Birren B.W."/>
        </authorList>
    </citation>
    <scope>NUCLEOTIDE SEQUENCE [LARGE SCALE GENOMIC DNA]</scope>
    <source>
        <strain>DSM 14603 / FGSC 9021 / UM521</strain>
    </source>
</reference>
<reference key="2">
    <citation type="submission" date="2014-09" db="EMBL/GenBank/DDBJ databases">
        <authorList>
            <person name="Gueldener U."/>
            <person name="Muensterkoetter M."/>
            <person name="Walter M.C."/>
            <person name="Mannhaupt G."/>
            <person name="Kahmann R."/>
        </authorList>
    </citation>
    <scope>GENOME REANNOTATION</scope>
    <source>
        <strain>DSM 14603 / FGSC 9021 / UM521</strain>
    </source>
</reference>
<keyword id="KW-0010">Activator</keyword>
<keyword id="KW-0067">ATP-binding</keyword>
<keyword id="KW-0175">Coiled coil</keyword>
<keyword id="KW-0227">DNA damage</keyword>
<keyword id="KW-0234">DNA repair</keyword>
<keyword id="KW-0238">DNA-binding</keyword>
<keyword id="KW-0378">Hydrolase</keyword>
<keyword id="KW-0547">Nucleotide-binding</keyword>
<keyword id="KW-0539">Nucleus</keyword>
<keyword id="KW-1185">Reference proteome</keyword>
<keyword id="KW-0804">Transcription</keyword>
<keyword id="KW-0805">Transcription regulation</keyword>
<comment type="function">
    <text evidence="6">ATPase component of the INO80 complex which remodels chromatin by shifting nucleosomes and is involved in DNA repair.</text>
</comment>
<comment type="catalytic activity">
    <reaction evidence="1">
        <text>ATP + H2O = ADP + phosphate + H(+)</text>
        <dbReference type="Rhea" id="RHEA:13065"/>
        <dbReference type="ChEBI" id="CHEBI:15377"/>
        <dbReference type="ChEBI" id="CHEBI:15378"/>
        <dbReference type="ChEBI" id="CHEBI:30616"/>
        <dbReference type="ChEBI" id="CHEBI:43474"/>
        <dbReference type="ChEBI" id="CHEBI:456216"/>
    </reaction>
</comment>
<comment type="subunit">
    <text evidence="6">Component of the INO80 chromatin-remodeling complex.</text>
</comment>
<comment type="subcellular location">
    <subcellularLocation>
        <location evidence="6">Nucleus</location>
    </subcellularLocation>
</comment>
<comment type="domain">
    <text evidence="2">The DBINO region is involved in binding to DNA.</text>
</comment>
<comment type="similarity">
    <text evidence="8">Belongs to the SNF2/RAD54 helicase family.</text>
</comment>
<evidence type="ECO:0000250" key="1">
    <source>
        <dbReference type="UniProtKB" id="P53115"/>
    </source>
</evidence>
<evidence type="ECO:0000250" key="2">
    <source>
        <dbReference type="UniProtKB" id="Q9ULG1"/>
    </source>
</evidence>
<evidence type="ECO:0000255" key="3"/>
<evidence type="ECO:0000255" key="4">
    <source>
        <dbReference type="PROSITE-ProRule" id="PRU00541"/>
    </source>
</evidence>
<evidence type="ECO:0000255" key="5">
    <source>
        <dbReference type="PROSITE-ProRule" id="PRU00542"/>
    </source>
</evidence>
<evidence type="ECO:0000255" key="6">
    <source>
        <dbReference type="PROSITE-ProRule" id="PRU00746"/>
    </source>
</evidence>
<evidence type="ECO:0000256" key="7">
    <source>
        <dbReference type="SAM" id="MobiDB-lite"/>
    </source>
</evidence>
<evidence type="ECO:0000305" key="8"/>
<gene>
    <name type="primary">INO80</name>
    <name type="ORF">UMAG_00751</name>
</gene>
<protein>
    <recommendedName>
        <fullName evidence="1">Chromatin-remodeling ATPase INO80</fullName>
        <ecNumber evidence="1">3.6.4.-</ecNumber>
    </recommendedName>
</protein>